<organism>
    <name type="scientific">Mycobacterium tuberculosis (strain CDC 1551 / Oshkosh)</name>
    <dbReference type="NCBI Taxonomy" id="83331"/>
    <lineage>
        <taxon>Bacteria</taxon>
        <taxon>Bacillati</taxon>
        <taxon>Actinomycetota</taxon>
        <taxon>Actinomycetes</taxon>
        <taxon>Mycobacteriales</taxon>
        <taxon>Mycobacteriaceae</taxon>
        <taxon>Mycobacterium</taxon>
        <taxon>Mycobacterium tuberculosis complex</taxon>
    </lineage>
</organism>
<sequence length="329" mass="34871">MSMSSYPRQRPRRLRSTVAMRRLVAQTSLEPRHLVLPMFVADGIDEPRPITSMPGVVQHTRDSLRRAAAAAVAAGVGGLMLFGVPRDQDKDGVGSAGIDPDGILNVALRDLAKDLGEATVLMADTCLDEFTDHGHCGVLDDRGRVDNDATVARYVELAVAQAESGAHVVGPSGMMDGQVAAIRDGLDAAGYIDVVILAYAAKFASAFYGPFREAVSSSLSGDRRTYQQEPGNAAEALREIELDLDEGADIVMVKPAMGYLDVVAAAADVSPVPVAAYQVSGEYAMIRAAAANNWIDERAAVLESLTGIRRAGADIVLTYWAVDAAGWLT</sequence>
<accession>P9WMP4</accession>
<accession>L0T5L2</accession>
<accession>O33357</accession>
<protein>
    <recommendedName>
        <fullName>Delta-aminolevulinic acid dehydratase</fullName>
        <shortName>ALAD</shortName>
        <shortName>ALADH</shortName>
        <ecNumber>4.2.1.24</ecNumber>
    </recommendedName>
    <alternativeName>
        <fullName>Porphobilinogen synthase</fullName>
    </alternativeName>
</protein>
<name>HEM2_MYCTO</name>
<feature type="chain" id="PRO_0000427268" description="Delta-aminolevulinic acid dehydratase">
    <location>
        <begin position="1"/>
        <end position="329"/>
    </location>
</feature>
<feature type="active site" description="Schiff-base intermediate with substrate" evidence="1">
    <location>
        <position position="202"/>
    </location>
</feature>
<feature type="active site" description="Schiff-base intermediate with substrate" evidence="1">
    <location>
        <position position="254"/>
    </location>
</feature>
<feature type="binding site" evidence="1">
    <location>
        <position position="212"/>
    </location>
    <ligand>
        <name>5-aminolevulinate</name>
        <dbReference type="ChEBI" id="CHEBI:356416"/>
        <label>1</label>
    </ligand>
</feature>
<feature type="binding site" evidence="1">
    <location>
        <position position="223"/>
    </location>
    <ligand>
        <name>5-aminolevulinate</name>
        <dbReference type="ChEBI" id="CHEBI:356416"/>
        <label>1</label>
    </ligand>
</feature>
<feature type="binding site" evidence="1">
    <location>
        <position position="239"/>
    </location>
    <ligand>
        <name>Mg(2+)</name>
        <dbReference type="ChEBI" id="CHEBI:18420"/>
    </ligand>
</feature>
<feature type="binding site" evidence="1">
    <location>
        <position position="280"/>
    </location>
    <ligand>
        <name>5-aminolevulinate</name>
        <dbReference type="ChEBI" id="CHEBI:356416"/>
        <label>2</label>
    </ligand>
</feature>
<feature type="binding site" evidence="1">
    <location>
        <position position="319"/>
    </location>
    <ligand>
        <name>5-aminolevulinate</name>
        <dbReference type="ChEBI" id="CHEBI:356416"/>
        <label>2</label>
    </ligand>
</feature>
<evidence type="ECO:0000250" key="1"/>
<evidence type="ECO:0000305" key="2"/>
<comment type="function">
    <text evidence="1">Catalyzes an early step in the biosynthesis of tetrapyrroles. Binds two molecules of 5-aminolevulinate per subunit, each at a distinct site, and catalyzes their condensation to form porphobilinogen (By similarity).</text>
</comment>
<comment type="catalytic activity">
    <reaction>
        <text>2 5-aminolevulinate = porphobilinogen + 2 H2O + H(+)</text>
        <dbReference type="Rhea" id="RHEA:24064"/>
        <dbReference type="ChEBI" id="CHEBI:15377"/>
        <dbReference type="ChEBI" id="CHEBI:15378"/>
        <dbReference type="ChEBI" id="CHEBI:58126"/>
        <dbReference type="ChEBI" id="CHEBI:356416"/>
        <dbReference type="EC" id="4.2.1.24"/>
    </reaction>
</comment>
<comment type="pathway">
    <text>Porphyrin-containing compound metabolism; protoporphyrin-IX biosynthesis; coproporphyrinogen-III from 5-aminolevulinate: step 1/4.</text>
</comment>
<comment type="subunit">
    <text evidence="1">Homooctamer.</text>
</comment>
<comment type="similarity">
    <text evidence="2">Belongs to the ALAD family.</text>
</comment>
<dbReference type="EC" id="4.2.1.24"/>
<dbReference type="EMBL" id="AE000516">
    <property type="protein sequence ID" value="AAK44756.1"/>
    <property type="molecule type" value="Genomic_DNA"/>
</dbReference>
<dbReference type="PIR" id="E70509">
    <property type="entry name" value="E70509"/>
</dbReference>
<dbReference type="RefSeq" id="WP_003898491.1">
    <property type="nucleotide sequence ID" value="NZ_KK341227.1"/>
</dbReference>
<dbReference type="SMR" id="P9WMP4"/>
<dbReference type="KEGG" id="mtc:MT0533"/>
<dbReference type="PATRIC" id="fig|83331.31.peg.565"/>
<dbReference type="HOGENOM" id="CLU_035731_0_0_11"/>
<dbReference type="UniPathway" id="UPA00251">
    <property type="reaction ID" value="UER00318"/>
</dbReference>
<dbReference type="Proteomes" id="UP000001020">
    <property type="component" value="Chromosome"/>
</dbReference>
<dbReference type="GO" id="GO:0005829">
    <property type="term" value="C:cytosol"/>
    <property type="evidence" value="ECO:0007669"/>
    <property type="project" value="TreeGrafter"/>
</dbReference>
<dbReference type="GO" id="GO:0004655">
    <property type="term" value="F:porphobilinogen synthase activity"/>
    <property type="evidence" value="ECO:0007669"/>
    <property type="project" value="UniProtKB-EC"/>
</dbReference>
<dbReference type="GO" id="GO:0008270">
    <property type="term" value="F:zinc ion binding"/>
    <property type="evidence" value="ECO:0007669"/>
    <property type="project" value="TreeGrafter"/>
</dbReference>
<dbReference type="GO" id="GO:0006782">
    <property type="term" value="P:protoporphyrinogen IX biosynthetic process"/>
    <property type="evidence" value="ECO:0007669"/>
    <property type="project" value="UniProtKB-UniPathway"/>
</dbReference>
<dbReference type="CDD" id="cd00384">
    <property type="entry name" value="ALAD_PBGS"/>
    <property type="match status" value="1"/>
</dbReference>
<dbReference type="FunFam" id="3.20.20.70:FF:000019">
    <property type="entry name" value="Delta-aminolevulinic acid dehydratase"/>
    <property type="match status" value="1"/>
</dbReference>
<dbReference type="Gene3D" id="3.20.20.70">
    <property type="entry name" value="Aldolase class I"/>
    <property type="match status" value="1"/>
</dbReference>
<dbReference type="InterPro" id="IPR001731">
    <property type="entry name" value="ALAD"/>
</dbReference>
<dbReference type="InterPro" id="IPR030656">
    <property type="entry name" value="ALAD_AS"/>
</dbReference>
<dbReference type="InterPro" id="IPR013785">
    <property type="entry name" value="Aldolase_TIM"/>
</dbReference>
<dbReference type="NCBIfam" id="NF006762">
    <property type="entry name" value="PRK09283.1"/>
    <property type="match status" value="1"/>
</dbReference>
<dbReference type="PANTHER" id="PTHR11458">
    <property type="entry name" value="DELTA-AMINOLEVULINIC ACID DEHYDRATASE"/>
    <property type="match status" value="1"/>
</dbReference>
<dbReference type="PANTHER" id="PTHR11458:SF0">
    <property type="entry name" value="DELTA-AMINOLEVULINIC ACID DEHYDRATASE"/>
    <property type="match status" value="1"/>
</dbReference>
<dbReference type="Pfam" id="PF00490">
    <property type="entry name" value="ALAD"/>
    <property type="match status" value="1"/>
</dbReference>
<dbReference type="PIRSF" id="PIRSF001415">
    <property type="entry name" value="Porphbilin_synth"/>
    <property type="match status" value="1"/>
</dbReference>
<dbReference type="PRINTS" id="PR00144">
    <property type="entry name" value="DALDHYDRTASE"/>
</dbReference>
<dbReference type="SMART" id="SM01004">
    <property type="entry name" value="ALAD"/>
    <property type="match status" value="1"/>
</dbReference>
<dbReference type="SUPFAM" id="SSF51569">
    <property type="entry name" value="Aldolase"/>
    <property type="match status" value="1"/>
</dbReference>
<dbReference type="PROSITE" id="PS00169">
    <property type="entry name" value="D_ALA_DEHYDRATASE"/>
    <property type="match status" value="1"/>
</dbReference>
<reference key="1">
    <citation type="journal article" date="2002" name="J. Bacteriol.">
        <title>Whole-genome comparison of Mycobacterium tuberculosis clinical and laboratory strains.</title>
        <authorList>
            <person name="Fleischmann R.D."/>
            <person name="Alland D."/>
            <person name="Eisen J.A."/>
            <person name="Carpenter L."/>
            <person name="White O."/>
            <person name="Peterson J.D."/>
            <person name="DeBoy R.T."/>
            <person name="Dodson R.J."/>
            <person name="Gwinn M.L."/>
            <person name="Haft D.H."/>
            <person name="Hickey E.K."/>
            <person name="Kolonay J.F."/>
            <person name="Nelson W.C."/>
            <person name="Umayam L.A."/>
            <person name="Ermolaeva M.D."/>
            <person name="Salzberg S.L."/>
            <person name="Delcher A."/>
            <person name="Utterback T.R."/>
            <person name="Weidman J.F."/>
            <person name="Khouri H.M."/>
            <person name="Gill J."/>
            <person name="Mikula A."/>
            <person name="Bishai W."/>
            <person name="Jacobs W.R. Jr."/>
            <person name="Venter J.C."/>
            <person name="Fraser C.M."/>
        </authorList>
    </citation>
    <scope>NUCLEOTIDE SEQUENCE [LARGE SCALE GENOMIC DNA]</scope>
    <source>
        <strain>CDC 1551 / Oshkosh</strain>
    </source>
</reference>
<gene>
    <name type="primary">hemB</name>
    <name type="ordered locus">MT0533</name>
</gene>
<proteinExistence type="inferred from homology"/>
<keyword id="KW-0350">Heme biosynthesis</keyword>
<keyword id="KW-0456">Lyase</keyword>
<keyword id="KW-0460">Magnesium</keyword>
<keyword id="KW-0479">Metal-binding</keyword>
<keyword id="KW-0627">Porphyrin biosynthesis</keyword>
<keyword id="KW-1185">Reference proteome</keyword>